<feature type="chain" id="PRO_0000116237" description="Uncharacterized gene 30 protein">
    <location>
        <begin position="1"/>
        <end position="75"/>
    </location>
</feature>
<sequence length="75" mass="8250">MSKPCISEEDFKDCQAFFAKPLPILVAEISKSLANIDFVDTASQQVDQLGIFLDLIGTECFKEVLCPHTSANLTN</sequence>
<dbReference type="EMBL" id="X64346">
    <property type="protein sequence ID" value="CAA45652.1"/>
    <property type="molecule type" value="Genomic_DNA"/>
</dbReference>
<dbReference type="RefSeq" id="NP_040232.1">
    <property type="nucleotide sequence ID" value="NC_001350.1"/>
</dbReference>
<dbReference type="SMR" id="Q01010"/>
<dbReference type="KEGG" id="vg:1682497"/>
<dbReference type="Proteomes" id="UP000000587">
    <property type="component" value="Segment"/>
</dbReference>
<dbReference type="InterPro" id="IPR008002">
    <property type="entry name" value="Herpes_Orf30"/>
</dbReference>
<dbReference type="Pfam" id="PF05338">
    <property type="entry name" value="DUF717"/>
    <property type="match status" value="1"/>
</dbReference>
<accession>Q01010</accession>
<organism>
    <name type="scientific">Saimiriine herpesvirus 2 (strain 11)</name>
    <name type="common">SaHV-2</name>
    <name type="synonym">Herpesvirus saimiri</name>
    <dbReference type="NCBI Taxonomy" id="10383"/>
    <lineage>
        <taxon>Viruses</taxon>
        <taxon>Duplodnaviria</taxon>
        <taxon>Heunggongvirae</taxon>
        <taxon>Peploviricota</taxon>
        <taxon>Herviviricetes</taxon>
        <taxon>Herpesvirales</taxon>
        <taxon>Orthoherpesviridae</taxon>
        <taxon>Gammaherpesvirinae</taxon>
        <taxon>Rhadinovirus</taxon>
        <taxon>Rhadinovirus saimiriinegamma2</taxon>
        <taxon>Saimiriine herpesvirus 2</taxon>
    </lineage>
</organism>
<keyword id="KW-1185">Reference proteome</keyword>
<name>UL91_SHV21</name>
<proteinExistence type="inferred from homology"/>
<organismHost>
    <name type="scientific">Saimiri sciureus</name>
    <name type="common">Common squirrel monkey</name>
    <dbReference type="NCBI Taxonomy" id="9521"/>
</organismHost>
<comment type="similarity">
    <text evidence="1">Belongs to the herpesviridae UL91 family.</text>
</comment>
<evidence type="ECO:0000305" key="1"/>
<gene>
    <name type="primary">30</name>
</gene>
<protein>
    <recommendedName>
        <fullName>Uncharacterized gene 30 protein</fullName>
    </recommendedName>
</protein>
<reference key="1">
    <citation type="journal article" date="1992" name="J. Virol.">
        <title>Primary structure of the herpesvirus saimiri genome.</title>
        <authorList>
            <person name="Albrecht J.-C."/>
            <person name="Nicholas J."/>
            <person name="Biller D."/>
            <person name="Cameron K.R."/>
            <person name="Biesinger B."/>
            <person name="Newman C."/>
            <person name="Wittmann S."/>
            <person name="Craxton M.A."/>
            <person name="Coleman H."/>
            <person name="Fleckenstein B."/>
            <person name="Honess R.W."/>
        </authorList>
    </citation>
    <scope>NUCLEOTIDE SEQUENCE [LARGE SCALE GENOMIC DNA]</scope>
</reference>